<feature type="chain" id="PRO_0000130733" description="Large ribosomal subunit protein uL24">
    <location>
        <begin position="1"/>
        <end position="101"/>
    </location>
</feature>
<gene>
    <name evidence="1" type="primary">rplX</name>
    <name type="ordered locus">M6_Spy0104</name>
</gene>
<name>RL24_STRP6</name>
<keyword id="KW-0687">Ribonucleoprotein</keyword>
<keyword id="KW-0689">Ribosomal protein</keyword>
<keyword id="KW-0694">RNA-binding</keyword>
<keyword id="KW-0699">rRNA-binding</keyword>
<organism>
    <name type="scientific">Streptococcus pyogenes serotype M6 (strain ATCC BAA-946 / MGAS10394)</name>
    <dbReference type="NCBI Taxonomy" id="286636"/>
    <lineage>
        <taxon>Bacteria</taxon>
        <taxon>Bacillati</taxon>
        <taxon>Bacillota</taxon>
        <taxon>Bacilli</taxon>
        <taxon>Lactobacillales</taxon>
        <taxon>Streptococcaceae</taxon>
        <taxon>Streptococcus</taxon>
    </lineage>
</organism>
<proteinExistence type="inferred from homology"/>
<sequence length="101" mass="10917">MFVKKGDKVRVIAGKDKGTEAVVLKALPKVNKVIVEGVGMIKKHQKPNTENPQGAIVEKEAPIHVSNVQVLDKNGVAGRVGYKVVDGKKVRYSKKSGEVLD</sequence>
<accession>Q5XEC4</accession>
<dbReference type="EMBL" id="CP000003">
    <property type="protein sequence ID" value="AAT86239.1"/>
    <property type="molecule type" value="Genomic_DNA"/>
</dbReference>
<dbReference type="RefSeq" id="WP_002986636.1">
    <property type="nucleotide sequence ID" value="NC_006086.1"/>
</dbReference>
<dbReference type="SMR" id="Q5XEC4"/>
<dbReference type="GeneID" id="69900037"/>
<dbReference type="KEGG" id="spa:M6_Spy0104"/>
<dbReference type="HOGENOM" id="CLU_093315_2_0_9"/>
<dbReference type="Proteomes" id="UP000001167">
    <property type="component" value="Chromosome"/>
</dbReference>
<dbReference type="GO" id="GO:1990904">
    <property type="term" value="C:ribonucleoprotein complex"/>
    <property type="evidence" value="ECO:0007669"/>
    <property type="project" value="UniProtKB-KW"/>
</dbReference>
<dbReference type="GO" id="GO:0005840">
    <property type="term" value="C:ribosome"/>
    <property type="evidence" value="ECO:0007669"/>
    <property type="project" value="UniProtKB-KW"/>
</dbReference>
<dbReference type="GO" id="GO:0019843">
    <property type="term" value="F:rRNA binding"/>
    <property type="evidence" value="ECO:0007669"/>
    <property type="project" value="UniProtKB-UniRule"/>
</dbReference>
<dbReference type="GO" id="GO:0003735">
    <property type="term" value="F:structural constituent of ribosome"/>
    <property type="evidence" value="ECO:0007669"/>
    <property type="project" value="InterPro"/>
</dbReference>
<dbReference type="GO" id="GO:0006412">
    <property type="term" value="P:translation"/>
    <property type="evidence" value="ECO:0007669"/>
    <property type="project" value="UniProtKB-UniRule"/>
</dbReference>
<dbReference type="CDD" id="cd06089">
    <property type="entry name" value="KOW_RPL26"/>
    <property type="match status" value="1"/>
</dbReference>
<dbReference type="FunFam" id="2.30.30.30:FF:000004">
    <property type="entry name" value="50S ribosomal protein L24"/>
    <property type="match status" value="1"/>
</dbReference>
<dbReference type="Gene3D" id="2.30.30.30">
    <property type="match status" value="1"/>
</dbReference>
<dbReference type="HAMAP" id="MF_01326_B">
    <property type="entry name" value="Ribosomal_uL24_B"/>
    <property type="match status" value="1"/>
</dbReference>
<dbReference type="InterPro" id="IPR005824">
    <property type="entry name" value="KOW"/>
</dbReference>
<dbReference type="InterPro" id="IPR014722">
    <property type="entry name" value="Rib_uL2_dom2"/>
</dbReference>
<dbReference type="InterPro" id="IPR003256">
    <property type="entry name" value="Ribosomal_uL24"/>
</dbReference>
<dbReference type="InterPro" id="IPR005825">
    <property type="entry name" value="Ribosomal_uL24_CS"/>
</dbReference>
<dbReference type="InterPro" id="IPR041988">
    <property type="entry name" value="Ribosomal_uL24_KOW"/>
</dbReference>
<dbReference type="InterPro" id="IPR008991">
    <property type="entry name" value="Translation_prot_SH3-like_sf"/>
</dbReference>
<dbReference type="NCBIfam" id="TIGR01079">
    <property type="entry name" value="rplX_bact"/>
    <property type="match status" value="1"/>
</dbReference>
<dbReference type="PANTHER" id="PTHR12903">
    <property type="entry name" value="MITOCHONDRIAL RIBOSOMAL PROTEIN L24"/>
    <property type="match status" value="1"/>
</dbReference>
<dbReference type="Pfam" id="PF00467">
    <property type="entry name" value="KOW"/>
    <property type="match status" value="1"/>
</dbReference>
<dbReference type="Pfam" id="PF17136">
    <property type="entry name" value="ribosomal_L24"/>
    <property type="match status" value="1"/>
</dbReference>
<dbReference type="SMART" id="SM00739">
    <property type="entry name" value="KOW"/>
    <property type="match status" value="1"/>
</dbReference>
<dbReference type="SUPFAM" id="SSF50104">
    <property type="entry name" value="Translation proteins SH3-like domain"/>
    <property type="match status" value="1"/>
</dbReference>
<dbReference type="PROSITE" id="PS01108">
    <property type="entry name" value="RIBOSOMAL_L24"/>
    <property type="match status" value="1"/>
</dbReference>
<comment type="function">
    <text evidence="1">One of two assembly initiator proteins, it binds directly to the 5'-end of the 23S rRNA, where it nucleates assembly of the 50S subunit.</text>
</comment>
<comment type="function">
    <text evidence="1">One of the proteins that surrounds the polypeptide exit tunnel on the outside of the subunit.</text>
</comment>
<comment type="subunit">
    <text evidence="1">Part of the 50S ribosomal subunit.</text>
</comment>
<comment type="similarity">
    <text evidence="1">Belongs to the universal ribosomal protein uL24 family.</text>
</comment>
<protein>
    <recommendedName>
        <fullName evidence="1">Large ribosomal subunit protein uL24</fullName>
    </recommendedName>
    <alternativeName>
        <fullName evidence="2">50S ribosomal protein L24</fullName>
    </alternativeName>
</protein>
<reference key="1">
    <citation type="journal article" date="2004" name="J. Infect. Dis.">
        <title>Progress toward characterization of the group A Streptococcus metagenome: complete genome sequence of a macrolide-resistant serotype M6 strain.</title>
        <authorList>
            <person name="Banks D.J."/>
            <person name="Porcella S.F."/>
            <person name="Barbian K.D."/>
            <person name="Beres S.B."/>
            <person name="Philips L.E."/>
            <person name="Voyich J.M."/>
            <person name="DeLeo F.R."/>
            <person name="Martin J.M."/>
            <person name="Somerville G.A."/>
            <person name="Musser J.M."/>
        </authorList>
    </citation>
    <scope>NUCLEOTIDE SEQUENCE [LARGE SCALE GENOMIC DNA]</scope>
    <source>
        <strain>ATCC BAA-946 / MGAS10394</strain>
    </source>
</reference>
<evidence type="ECO:0000255" key="1">
    <source>
        <dbReference type="HAMAP-Rule" id="MF_01326"/>
    </source>
</evidence>
<evidence type="ECO:0000305" key="2"/>